<gene>
    <name type="primary">THG1</name>
    <name type="ordered locus">CAGL0J00209g</name>
</gene>
<feature type="chain" id="PRO_0000284990" description="tRNA(His) guanylyltransferase">
    <location>
        <begin position="1"/>
        <end position="237"/>
    </location>
</feature>
<feature type="binding site" evidence="1">
    <location>
        <begin position="29"/>
        <end position="34"/>
    </location>
    <ligand>
        <name>GTP</name>
        <dbReference type="ChEBI" id="CHEBI:37565"/>
    </ligand>
</feature>
<feature type="binding site" evidence="1">
    <location>
        <position position="29"/>
    </location>
    <ligand>
        <name>Mg(2+)</name>
        <dbReference type="ChEBI" id="CHEBI:18420"/>
        <label>1</label>
        <note>catalytic</note>
    </ligand>
</feature>
<feature type="binding site" evidence="1">
    <location>
        <position position="29"/>
    </location>
    <ligand>
        <name>Mg(2+)</name>
        <dbReference type="ChEBI" id="CHEBI:18420"/>
        <label>2</label>
        <note>catalytic</note>
    </ligand>
</feature>
<feature type="binding site" evidence="1">
    <location>
        <position position="30"/>
    </location>
    <ligand>
        <name>Mg(2+)</name>
        <dbReference type="ChEBI" id="CHEBI:18420"/>
        <label>1</label>
        <note>catalytic</note>
    </ligand>
</feature>
<feature type="binding site" evidence="1">
    <location>
        <begin position="76"/>
        <end position="77"/>
    </location>
    <ligand>
        <name>GTP</name>
        <dbReference type="ChEBI" id="CHEBI:37565"/>
    </ligand>
</feature>
<feature type="binding site" evidence="1">
    <location>
        <position position="77"/>
    </location>
    <ligand>
        <name>Mg(2+)</name>
        <dbReference type="ChEBI" id="CHEBI:18420"/>
        <label>1</label>
        <note>catalytic</note>
    </ligand>
</feature>
<feature type="binding site" evidence="1">
    <location>
        <position position="77"/>
    </location>
    <ligand>
        <name>Mg(2+)</name>
        <dbReference type="ChEBI" id="CHEBI:18420"/>
        <label>2</label>
        <note>catalytic</note>
    </ligand>
</feature>
<evidence type="ECO:0000250" key="1"/>
<evidence type="ECO:0000250" key="2">
    <source>
        <dbReference type="UniProtKB" id="P53215"/>
    </source>
</evidence>
<evidence type="ECO:0000305" key="3"/>
<reference key="1">
    <citation type="journal article" date="2004" name="Nature">
        <title>Genome evolution in yeasts.</title>
        <authorList>
            <person name="Dujon B."/>
            <person name="Sherman D."/>
            <person name="Fischer G."/>
            <person name="Durrens P."/>
            <person name="Casaregola S."/>
            <person name="Lafontaine I."/>
            <person name="de Montigny J."/>
            <person name="Marck C."/>
            <person name="Neuveglise C."/>
            <person name="Talla E."/>
            <person name="Goffard N."/>
            <person name="Frangeul L."/>
            <person name="Aigle M."/>
            <person name="Anthouard V."/>
            <person name="Babour A."/>
            <person name="Barbe V."/>
            <person name="Barnay S."/>
            <person name="Blanchin S."/>
            <person name="Beckerich J.-M."/>
            <person name="Beyne E."/>
            <person name="Bleykasten C."/>
            <person name="Boisrame A."/>
            <person name="Boyer J."/>
            <person name="Cattolico L."/>
            <person name="Confanioleri F."/>
            <person name="de Daruvar A."/>
            <person name="Despons L."/>
            <person name="Fabre E."/>
            <person name="Fairhead C."/>
            <person name="Ferry-Dumazet H."/>
            <person name="Groppi A."/>
            <person name="Hantraye F."/>
            <person name="Hennequin C."/>
            <person name="Jauniaux N."/>
            <person name="Joyet P."/>
            <person name="Kachouri R."/>
            <person name="Kerrest A."/>
            <person name="Koszul R."/>
            <person name="Lemaire M."/>
            <person name="Lesur I."/>
            <person name="Ma L."/>
            <person name="Muller H."/>
            <person name="Nicaud J.-M."/>
            <person name="Nikolski M."/>
            <person name="Oztas S."/>
            <person name="Ozier-Kalogeropoulos O."/>
            <person name="Pellenz S."/>
            <person name="Potier S."/>
            <person name="Richard G.-F."/>
            <person name="Straub M.-L."/>
            <person name="Suleau A."/>
            <person name="Swennen D."/>
            <person name="Tekaia F."/>
            <person name="Wesolowski-Louvel M."/>
            <person name="Westhof E."/>
            <person name="Wirth B."/>
            <person name="Zeniou-Meyer M."/>
            <person name="Zivanovic Y."/>
            <person name="Bolotin-Fukuhara M."/>
            <person name="Thierry A."/>
            <person name="Bouchier C."/>
            <person name="Caudron B."/>
            <person name="Scarpelli C."/>
            <person name="Gaillardin C."/>
            <person name="Weissenbach J."/>
            <person name="Wincker P."/>
            <person name="Souciet J.-L."/>
        </authorList>
    </citation>
    <scope>NUCLEOTIDE SEQUENCE [LARGE SCALE GENOMIC DNA]</scope>
    <source>
        <strain>ATCC 2001 / BCRC 20586 / JCM 3761 / NBRC 0622 / NRRL Y-65 / CBS 138</strain>
    </source>
</reference>
<protein>
    <recommendedName>
        <fullName>tRNA(His) guanylyltransferase</fullName>
        <ecNumber evidence="2">2.7.7.79</ecNumber>
    </recommendedName>
    <alternativeName>
        <fullName>tRNA-histidine guanylyltransferase</fullName>
    </alternativeName>
</protein>
<sequence>MAKSKYEYVKQFESHDTLLPQCYIVVRIDGKKFHEFSKYYDFKKPNDERALKLMNACAKNVVLQYRHEMILAYGESDEYSFVLKKDTELYKRRRDKLSTLIVSLFTSNYVALWSKFFPGTNLHPKHLPFFDSRCVIYPNLETIRDYVTWRYVDTHINNLYNTAFWQLIQKCGMNPQEAEKRLSGTVSSEKNEILFKECGINYNNEPEMYKKGSLITNKGEILHINVIDSLDSLFEGY</sequence>
<accession>Q6FPX3</accession>
<dbReference type="EC" id="2.7.7.79" evidence="2"/>
<dbReference type="EMBL" id="CR380956">
    <property type="protein sequence ID" value="CAG60668.1"/>
    <property type="molecule type" value="Genomic_DNA"/>
</dbReference>
<dbReference type="RefSeq" id="XP_447721.1">
    <property type="nucleotide sequence ID" value="XM_447721.1"/>
</dbReference>
<dbReference type="SMR" id="Q6FPX3"/>
<dbReference type="FunCoup" id="Q6FPX3">
    <property type="interactions" value="795"/>
</dbReference>
<dbReference type="STRING" id="284593.Q6FPX3"/>
<dbReference type="EnsemblFungi" id="CAGL0J00209g-T">
    <property type="protein sequence ID" value="CAGL0J00209g-T-p1"/>
    <property type="gene ID" value="CAGL0J00209g"/>
</dbReference>
<dbReference type="KEGG" id="cgr:2889888"/>
<dbReference type="CGD" id="CAL0133224">
    <property type="gene designation" value="CAGL0J00209g"/>
</dbReference>
<dbReference type="VEuPathDB" id="FungiDB:B1J91_J00209g"/>
<dbReference type="VEuPathDB" id="FungiDB:CAGL0J00209g"/>
<dbReference type="eggNOG" id="KOG2721">
    <property type="taxonomic scope" value="Eukaryota"/>
</dbReference>
<dbReference type="HOGENOM" id="CLU_044271_0_1_1"/>
<dbReference type="InParanoid" id="Q6FPX3"/>
<dbReference type="OMA" id="WKQHTEI"/>
<dbReference type="Proteomes" id="UP000002428">
    <property type="component" value="Chromosome J"/>
</dbReference>
<dbReference type="GO" id="GO:0005525">
    <property type="term" value="F:GTP binding"/>
    <property type="evidence" value="ECO:0007669"/>
    <property type="project" value="UniProtKB-KW"/>
</dbReference>
<dbReference type="GO" id="GO:0042802">
    <property type="term" value="F:identical protein binding"/>
    <property type="evidence" value="ECO:0007669"/>
    <property type="project" value="EnsemblFungi"/>
</dbReference>
<dbReference type="GO" id="GO:0000287">
    <property type="term" value="F:magnesium ion binding"/>
    <property type="evidence" value="ECO:0007669"/>
    <property type="project" value="InterPro"/>
</dbReference>
<dbReference type="GO" id="GO:0008193">
    <property type="term" value="F:tRNA guanylyltransferase activity"/>
    <property type="evidence" value="ECO:0000250"/>
    <property type="project" value="UniProtKB"/>
</dbReference>
<dbReference type="GO" id="GO:0006400">
    <property type="term" value="P:tRNA modification"/>
    <property type="evidence" value="ECO:0000250"/>
    <property type="project" value="UniProtKB"/>
</dbReference>
<dbReference type="GO" id="GO:0008033">
    <property type="term" value="P:tRNA processing"/>
    <property type="evidence" value="ECO:0000250"/>
    <property type="project" value="UniProtKB"/>
</dbReference>
<dbReference type="FunFam" id="3.30.70.3000:FF:000003">
    <property type="entry name" value="tRNA(His) guanylyltransferase"/>
    <property type="match status" value="1"/>
</dbReference>
<dbReference type="Gene3D" id="3.30.70.3000">
    <property type="match status" value="1"/>
</dbReference>
<dbReference type="InterPro" id="IPR025845">
    <property type="entry name" value="Thg1_C_dom"/>
</dbReference>
<dbReference type="InterPro" id="IPR024956">
    <property type="entry name" value="tRNAHis_GuaTrfase_cat"/>
</dbReference>
<dbReference type="InterPro" id="IPR007537">
    <property type="entry name" value="tRNAHis_GuaTrfase_Thg1"/>
</dbReference>
<dbReference type="InterPro" id="IPR038469">
    <property type="entry name" value="tRNAHis_GuaTrfase_Thg1_sf"/>
</dbReference>
<dbReference type="PANTHER" id="PTHR12729">
    <property type="entry name" value="TRNA(HIS) GUANYLYLTRANSFERASE-RELATED"/>
    <property type="match status" value="1"/>
</dbReference>
<dbReference type="PANTHER" id="PTHR12729:SF6">
    <property type="entry name" value="TRNA(HIS) GUANYLYLTRANSFERASE-RELATED"/>
    <property type="match status" value="1"/>
</dbReference>
<dbReference type="Pfam" id="PF04446">
    <property type="entry name" value="Thg1"/>
    <property type="match status" value="1"/>
</dbReference>
<dbReference type="Pfam" id="PF14413">
    <property type="entry name" value="Thg1C"/>
    <property type="match status" value="1"/>
</dbReference>
<dbReference type="PIRSF" id="PIRSF028980">
    <property type="entry name" value="tRNAHis_guanylyltransferase"/>
    <property type="match status" value="1"/>
</dbReference>
<name>THG1_CANGA</name>
<comment type="function">
    <text evidence="2">Adds a GMP to the 5'-end of tRNA(His) after transcription and RNase P cleavage.</text>
</comment>
<comment type="catalytic activity">
    <reaction evidence="2">
        <text>a 5'-end ribonucleotide-tRNA(His) + GTP + ATP + H2O = a 5'-end phospho-guanosine-ribonucleotide-tRNA(His) + AMP + 2 diphosphate + H(+)</text>
        <dbReference type="Rhea" id="RHEA:54564"/>
        <dbReference type="Rhea" id="RHEA-COMP:14193"/>
        <dbReference type="Rhea" id="RHEA-COMP:14917"/>
        <dbReference type="ChEBI" id="CHEBI:15377"/>
        <dbReference type="ChEBI" id="CHEBI:15378"/>
        <dbReference type="ChEBI" id="CHEBI:30616"/>
        <dbReference type="ChEBI" id="CHEBI:33019"/>
        <dbReference type="ChEBI" id="CHEBI:37565"/>
        <dbReference type="ChEBI" id="CHEBI:138282"/>
        <dbReference type="ChEBI" id="CHEBI:141847"/>
        <dbReference type="ChEBI" id="CHEBI:456215"/>
        <dbReference type="EC" id="2.7.7.79"/>
    </reaction>
</comment>
<comment type="cofactor">
    <cofactor evidence="1">
        <name>Mg(2+)</name>
        <dbReference type="ChEBI" id="CHEBI:18420"/>
    </cofactor>
    <text evidence="1">Binds 2 magnesium ions per subunit.</text>
</comment>
<comment type="similarity">
    <text evidence="3">Belongs to the tRNA(His) guanylyltransferase family.</text>
</comment>
<proteinExistence type="inferred from homology"/>
<keyword id="KW-0342">GTP-binding</keyword>
<keyword id="KW-0460">Magnesium</keyword>
<keyword id="KW-0479">Metal-binding</keyword>
<keyword id="KW-0547">Nucleotide-binding</keyword>
<keyword id="KW-0548">Nucleotidyltransferase</keyword>
<keyword id="KW-1185">Reference proteome</keyword>
<keyword id="KW-0808">Transferase</keyword>
<keyword id="KW-0819">tRNA processing</keyword>
<organism>
    <name type="scientific">Candida glabrata (strain ATCC 2001 / BCRC 20586 / JCM 3761 / NBRC 0622 / NRRL Y-65 / CBS 138)</name>
    <name type="common">Yeast</name>
    <name type="synonym">Nakaseomyces glabratus</name>
    <dbReference type="NCBI Taxonomy" id="284593"/>
    <lineage>
        <taxon>Eukaryota</taxon>
        <taxon>Fungi</taxon>
        <taxon>Dikarya</taxon>
        <taxon>Ascomycota</taxon>
        <taxon>Saccharomycotina</taxon>
        <taxon>Saccharomycetes</taxon>
        <taxon>Saccharomycetales</taxon>
        <taxon>Saccharomycetaceae</taxon>
        <taxon>Nakaseomyces</taxon>
    </lineage>
</organism>